<organism>
    <name type="scientific">Arabidopsis thaliana</name>
    <name type="common">Mouse-ear cress</name>
    <dbReference type="NCBI Taxonomy" id="3702"/>
    <lineage>
        <taxon>Eukaryota</taxon>
        <taxon>Viridiplantae</taxon>
        <taxon>Streptophyta</taxon>
        <taxon>Embryophyta</taxon>
        <taxon>Tracheophyta</taxon>
        <taxon>Spermatophyta</taxon>
        <taxon>Magnoliopsida</taxon>
        <taxon>eudicotyledons</taxon>
        <taxon>Gunneridae</taxon>
        <taxon>Pentapetalae</taxon>
        <taxon>rosids</taxon>
        <taxon>malvids</taxon>
        <taxon>Brassicales</taxon>
        <taxon>Brassicaceae</taxon>
        <taxon>Camelineae</taxon>
        <taxon>Arabidopsis</taxon>
    </lineage>
</organism>
<keyword id="KW-0274">FAD</keyword>
<keyword id="KW-0285">Flavoprotein</keyword>
<keyword id="KW-0503">Monooxygenase</keyword>
<keyword id="KW-0521">NADP</keyword>
<keyword id="KW-0560">Oxidoreductase</keyword>
<keyword id="KW-1185">Reference proteome</keyword>
<feature type="chain" id="PRO_0000401961" description="Flavin-containing monooxygenase FMO GS-OX-like 6">
    <location>
        <begin position="1"/>
        <end position="470"/>
    </location>
</feature>
<feature type="binding site" evidence="2">
    <location>
        <begin position="17"/>
        <end position="22"/>
    </location>
    <ligand>
        <name>FAD</name>
        <dbReference type="ChEBI" id="CHEBI:57692"/>
    </ligand>
</feature>
<feature type="binding site" evidence="2">
    <location>
        <begin position="214"/>
        <end position="219"/>
    </location>
    <ligand>
        <name>NADP(+)</name>
        <dbReference type="ChEBI" id="CHEBI:58349"/>
    </ligand>
</feature>
<sequence>MTPPPNSISSRNVAVIGAGAAGLVAARELRREGHTVTIFERQKQVGGLWVCTPNVEPDLLSIDPDRTVVHSSVYQSLRTNLPRECMGYSDFPFVTRPDDESRDPRRYPDHREVMRYLQDFAKEFKIEEMIRFETEVFRVEPTAENSCKWRVQFRSSSGVSGEDIFDAVVICNGHFTEPRLAHIPGIESWPGKQIHSHNYRVSDPFKGQVVIVIGYQSSGSDISRDIAILAKEVHIAAKSDAYAKESSIYSNLHFHPTIDRVYEDGSVVFQDGKLIFADAIVHCTGYKYCFPFLETKGYVNVEDNRVGPLYKHVFPPALAPGLSFIGLPSMALQFFMFEIQSRWVASVLSGRVKLPSEEQMMEDVIAFYAKLKSLGIPKRFTHFLTDPQWTPMFEKLKPHEAVLISQSEYFNWIAEQCGCSSIERWREEQYNIAIKKDDDNFRDEWDDDDQIIQEAYRDFAKFKPSKVWST</sequence>
<proteinExistence type="evidence at transcript level"/>
<name>GSXL6_ARATH</name>
<dbReference type="EC" id="1.8.-.-"/>
<dbReference type="EMBL" id="AC022522">
    <property type="protein sequence ID" value="AAG12580.1"/>
    <property type="molecule type" value="Genomic_DNA"/>
</dbReference>
<dbReference type="EMBL" id="CP002684">
    <property type="protein sequence ID" value="AEE28840.1"/>
    <property type="molecule type" value="Genomic_DNA"/>
</dbReference>
<dbReference type="EMBL" id="DQ056453">
    <property type="protein sequence ID" value="AAY78610.1"/>
    <property type="molecule type" value="mRNA"/>
</dbReference>
<dbReference type="EMBL" id="BT026366">
    <property type="protein sequence ID" value="ABH04473.1"/>
    <property type="molecule type" value="mRNA"/>
</dbReference>
<dbReference type="PIR" id="C86256">
    <property type="entry name" value="C86256"/>
</dbReference>
<dbReference type="RefSeq" id="NP_172677.1">
    <property type="nucleotide sequence ID" value="NM_101085.2"/>
</dbReference>
<dbReference type="SMR" id="Q9FWW3"/>
<dbReference type="FunCoup" id="Q9FWW3">
    <property type="interactions" value="414"/>
</dbReference>
<dbReference type="STRING" id="3702.Q9FWW3"/>
<dbReference type="PaxDb" id="3702-AT1G12130.1"/>
<dbReference type="ProteomicsDB" id="247139"/>
<dbReference type="EnsemblPlants" id="AT1G12130.1">
    <property type="protein sequence ID" value="AT1G12130.1"/>
    <property type="gene ID" value="AT1G12130"/>
</dbReference>
<dbReference type="GeneID" id="837765"/>
<dbReference type="Gramene" id="AT1G12130.1">
    <property type="protein sequence ID" value="AT1G12130.1"/>
    <property type="gene ID" value="AT1G12130"/>
</dbReference>
<dbReference type="KEGG" id="ath:AT1G12130"/>
<dbReference type="Araport" id="AT1G12130"/>
<dbReference type="TAIR" id="AT1G12130">
    <property type="gene designation" value="FMOGS-OX6"/>
</dbReference>
<dbReference type="eggNOG" id="KOG1399">
    <property type="taxonomic scope" value="Eukaryota"/>
</dbReference>
<dbReference type="HOGENOM" id="CLU_006909_3_0_1"/>
<dbReference type="InParanoid" id="Q9FWW3"/>
<dbReference type="OMA" id="MALQFFM"/>
<dbReference type="PhylomeDB" id="Q9FWW3"/>
<dbReference type="BioCyc" id="ARA:AT1G12130-MONOMER"/>
<dbReference type="PRO" id="PR:Q9FWW3"/>
<dbReference type="Proteomes" id="UP000006548">
    <property type="component" value="Chromosome 1"/>
</dbReference>
<dbReference type="ExpressionAtlas" id="Q9FWW3">
    <property type="expression patterns" value="baseline and differential"/>
</dbReference>
<dbReference type="GO" id="GO:0050660">
    <property type="term" value="F:flavin adenine dinucleotide binding"/>
    <property type="evidence" value="ECO:0007669"/>
    <property type="project" value="InterPro"/>
</dbReference>
<dbReference type="GO" id="GO:0004499">
    <property type="term" value="F:N,N-dimethylaniline monooxygenase activity"/>
    <property type="evidence" value="ECO:0007669"/>
    <property type="project" value="InterPro"/>
</dbReference>
<dbReference type="GO" id="GO:0050661">
    <property type="term" value="F:NADP binding"/>
    <property type="evidence" value="ECO:0007669"/>
    <property type="project" value="InterPro"/>
</dbReference>
<dbReference type="GO" id="GO:0019761">
    <property type="term" value="P:glucosinolate biosynthetic process"/>
    <property type="evidence" value="ECO:0000315"/>
    <property type="project" value="TAIR"/>
</dbReference>
<dbReference type="GO" id="GO:0009737">
    <property type="term" value="P:response to abscisic acid"/>
    <property type="evidence" value="ECO:0000270"/>
    <property type="project" value="TAIR"/>
</dbReference>
<dbReference type="GO" id="GO:0009753">
    <property type="term" value="P:response to jasmonic acid"/>
    <property type="evidence" value="ECO:0000270"/>
    <property type="project" value="TAIR"/>
</dbReference>
<dbReference type="GO" id="GO:0009751">
    <property type="term" value="P:response to salicylic acid"/>
    <property type="evidence" value="ECO:0000270"/>
    <property type="project" value="TAIR"/>
</dbReference>
<dbReference type="FunFam" id="3.50.50.60:FF:000099">
    <property type="entry name" value="Flavin-containing monooxygenase"/>
    <property type="match status" value="1"/>
</dbReference>
<dbReference type="Gene3D" id="3.50.50.60">
    <property type="entry name" value="FAD/NAD(P)-binding domain"/>
    <property type="match status" value="2"/>
</dbReference>
<dbReference type="InterPro" id="IPR036188">
    <property type="entry name" value="FAD/NAD-bd_sf"/>
</dbReference>
<dbReference type="InterPro" id="IPR000960">
    <property type="entry name" value="Flavin_mOase"/>
</dbReference>
<dbReference type="InterPro" id="IPR020946">
    <property type="entry name" value="Flavin_mOase-like"/>
</dbReference>
<dbReference type="InterPro" id="IPR050346">
    <property type="entry name" value="FMO-like"/>
</dbReference>
<dbReference type="PANTHER" id="PTHR23023">
    <property type="entry name" value="DIMETHYLANILINE MONOOXYGENASE"/>
    <property type="match status" value="1"/>
</dbReference>
<dbReference type="Pfam" id="PF00743">
    <property type="entry name" value="FMO-like"/>
    <property type="match status" value="2"/>
</dbReference>
<dbReference type="PRINTS" id="PR00370">
    <property type="entry name" value="FMOXYGENASE"/>
</dbReference>
<dbReference type="SUPFAM" id="SSF51905">
    <property type="entry name" value="FAD/NAD(P)-binding domain"/>
    <property type="match status" value="2"/>
</dbReference>
<comment type="function">
    <text evidence="1">Catalyzes the conversion of methylthioalkyl glucosinolates of any chain length into methylsulfinylalkyl glucosinolates.</text>
</comment>
<comment type="cofactor">
    <cofactor evidence="1">
        <name>FAD</name>
        <dbReference type="ChEBI" id="CHEBI:57692"/>
    </cofactor>
</comment>
<comment type="similarity">
    <text evidence="3">Belongs to the FMO family.</text>
</comment>
<reference key="1">
    <citation type="journal article" date="2000" name="Nature">
        <title>Sequence and analysis of chromosome 1 of the plant Arabidopsis thaliana.</title>
        <authorList>
            <person name="Theologis A."/>
            <person name="Ecker J.R."/>
            <person name="Palm C.J."/>
            <person name="Federspiel N.A."/>
            <person name="Kaul S."/>
            <person name="White O."/>
            <person name="Alonso J."/>
            <person name="Altafi H."/>
            <person name="Araujo R."/>
            <person name="Bowman C.L."/>
            <person name="Brooks S.Y."/>
            <person name="Buehler E."/>
            <person name="Chan A."/>
            <person name="Chao Q."/>
            <person name="Chen H."/>
            <person name="Cheuk R.F."/>
            <person name="Chin C.W."/>
            <person name="Chung M.K."/>
            <person name="Conn L."/>
            <person name="Conway A.B."/>
            <person name="Conway A.R."/>
            <person name="Creasy T.H."/>
            <person name="Dewar K."/>
            <person name="Dunn P."/>
            <person name="Etgu P."/>
            <person name="Feldblyum T.V."/>
            <person name="Feng J.-D."/>
            <person name="Fong B."/>
            <person name="Fujii C.Y."/>
            <person name="Gill J.E."/>
            <person name="Goldsmith A.D."/>
            <person name="Haas B."/>
            <person name="Hansen N.F."/>
            <person name="Hughes B."/>
            <person name="Huizar L."/>
            <person name="Hunter J.L."/>
            <person name="Jenkins J."/>
            <person name="Johnson-Hopson C."/>
            <person name="Khan S."/>
            <person name="Khaykin E."/>
            <person name="Kim C.J."/>
            <person name="Koo H.L."/>
            <person name="Kremenetskaia I."/>
            <person name="Kurtz D.B."/>
            <person name="Kwan A."/>
            <person name="Lam B."/>
            <person name="Langin-Hooper S."/>
            <person name="Lee A."/>
            <person name="Lee J.M."/>
            <person name="Lenz C.A."/>
            <person name="Li J.H."/>
            <person name="Li Y.-P."/>
            <person name="Lin X."/>
            <person name="Liu S.X."/>
            <person name="Liu Z.A."/>
            <person name="Luros J.S."/>
            <person name="Maiti R."/>
            <person name="Marziali A."/>
            <person name="Militscher J."/>
            <person name="Miranda M."/>
            <person name="Nguyen M."/>
            <person name="Nierman W.C."/>
            <person name="Osborne B.I."/>
            <person name="Pai G."/>
            <person name="Peterson J."/>
            <person name="Pham P.K."/>
            <person name="Rizzo M."/>
            <person name="Rooney T."/>
            <person name="Rowley D."/>
            <person name="Sakano H."/>
            <person name="Salzberg S.L."/>
            <person name="Schwartz J.R."/>
            <person name="Shinn P."/>
            <person name="Southwick A.M."/>
            <person name="Sun H."/>
            <person name="Tallon L.J."/>
            <person name="Tambunga G."/>
            <person name="Toriumi M.J."/>
            <person name="Town C.D."/>
            <person name="Utterback T."/>
            <person name="Van Aken S."/>
            <person name="Vaysberg M."/>
            <person name="Vysotskaia V.S."/>
            <person name="Walker M."/>
            <person name="Wu D."/>
            <person name="Yu G."/>
            <person name="Fraser C.M."/>
            <person name="Venter J.C."/>
            <person name="Davis R.W."/>
        </authorList>
    </citation>
    <scope>NUCLEOTIDE SEQUENCE [LARGE SCALE GENOMIC DNA]</scope>
    <source>
        <strain>cv. Columbia</strain>
    </source>
</reference>
<reference key="2">
    <citation type="journal article" date="2017" name="Plant J.">
        <title>Araport11: a complete reannotation of the Arabidopsis thaliana reference genome.</title>
        <authorList>
            <person name="Cheng C.Y."/>
            <person name="Krishnakumar V."/>
            <person name="Chan A.P."/>
            <person name="Thibaud-Nissen F."/>
            <person name="Schobel S."/>
            <person name="Town C.D."/>
        </authorList>
    </citation>
    <scope>GENOME REANNOTATION</scope>
    <source>
        <strain>cv. Columbia</strain>
    </source>
</reference>
<reference key="3">
    <citation type="submission" date="2005-05" db="EMBL/GenBank/DDBJ databases">
        <authorList>
            <person name="Underwood B.A."/>
            <person name="Xiao Y.-L."/>
            <person name="Moskal W.A. Jr."/>
            <person name="Monaghan E.L."/>
            <person name="Wang W."/>
            <person name="Redman J.C."/>
            <person name="Wu H.C."/>
            <person name="Utterback T."/>
            <person name="Town C.D."/>
        </authorList>
    </citation>
    <scope>NUCLEOTIDE SEQUENCE [LARGE SCALE MRNA]</scope>
    <source>
        <strain>cv. Columbia</strain>
    </source>
</reference>
<reference key="4">
    <citation type="submission" date="2006-08" db="EMBL/GenBank/DDBJ databases">
        <title>Arabidopsis ORF Clones.</title>
        <authorList>
            <person name="Quinitio C."/>
            <person name="Chen H."/>
            <person name="Kim C.J."/>
            <person name="Shinn P."/>
            <person name="Ecker J.R."/>
        </authorList>
    </citation>
    <scope>NUCLEOTIDE SEQUENCE [LARGE SCALE MRNA]</scope>
    <source>
        <strain>cv. Columbia</strain>
    </source>
</reference>
<reference key="5">
    <citation type="journal article" date="2007" name="Plant J.">
        <title>Identification of a flavin-monooxygenase as the S-oxygenating enzyme in aliphatic glucosinolate biosynthesis in Arabidopsis.</title>
        <authorList>
            <person name="Hansen B.G."/>
            <person name="Kliebenstein D.J."/>
            <person name="Halkier B.A."/>
        </authorList>
    </citation>
    <scope>GENE FAMILY</scope>
    <source>
        <strain>cv. Columbia</strain>
    </source>
</reference>
<evidence type="ECO:0000250" key="1"/>
<evidence type="ECO:0000255" key="2"/>
<evidence type="ECO:0000305" key="3"/>
<accession>Q9FWW3</accession>
<gene>
    <name type="ordered locus">At1g12130</name>
    <name type="ORF">T28K15.13</name>
</gene>
<protein>
    <recommendedName>
        <fullName>Flavin-containing monooxygenase FMO GS-OX-like 6</fullName>
        <ecNumber>1.8.-.-</ecNumber>
    </recommendedName>
    <alternativeName>
        <fullName>Flavin-monooxygenase glucosinolate S-oxygenase-like 6</fullName>
    </alternativeName>
</protein>